<feature type="chain" id="PRO_0000375250" description="SKP1-like protein 9">
    <location>
        <begin position="1"/>
        <end position="153"/>
    </location>
</feature>
<feature type="region of interest" description="Interaction with the F-box domain of F-box proteins" evidence="1">
    <location>
        <begin position="95"/>
        <end position="153"/>
    </location>
</feature>
<accession>Q9LSX9</accession>
<accession>A0MEX6</accession>
<gene>
    <name type="primary">ASK9</name>
    <name type="ordered locus">At3g21850</name>
    <name type="ORF">MSD21.22</name>
</gene>
<organism>
    <name type="scientific">Arabidopsis thaliana</name>
    <name type="common">Mouse-ear cress</name>
    <dbReference type="NCBI Taxonomy" id="3702"/>
    <lineage>
        <taxon>Eukaryota</taxon>
        <taxon>Viridiplantae</taxon>
        <taxon>Streptophyta</taxon>
        <taxon>Embryophyta</taxon>
        <taxon>Tracheophyta</taxon>
        <taxon>Spermatophyta</taxon>
        <taxon>Magnoliopsida</taxon>
        <taxon>eudicotyledons</taxon>
        <taxon>Gunneridae</taxon>
        <taxon>Pentapetalae</taxon>
        <taxon>rosids</taxon>
        <taxon>malvids</taxon>
        <taxon>Brassicales</taxon>
        <taxon>Brassicaceae</taxon>
        <taxon>Camelineae</taxon>
        <taxon>Arabidopsis</taxon>
    </lineage>
</organism>
<reference key="1">
    <citation type="journal article" date="2000" name="DNA Res.">
        <title>Structural analysis of Arabidopsis thaliana chromosome 3. I. Sequence features of the regions of 4,504,864 bp covered by sixty P1 and TAC clones.</title>
        <authorList>
            <person name="Sato S."/>
            <person name="Nakamura Y."/>
            <person name="Kaneko T."/>
            <person name="Katoh T."/>
            <person name="Asamizu E."/>
            <person name="Tabata S."/>
        </authorList>
    </citation>
    <scope>NUCLEOTIDE SEQUENCE [LARGE SCALE GENOMIC DNA]</scope>
    <source>
        <strain>cv. Columbia</strain>
    </source>
</reference>
<reference key="2">
    <citation type="journal article" date="2017" name="Plant J.">
        <title>Araport11: a complete reannotation of the Arabidopsis thaliana reference genome.</title>
        <authorList>
            <person name="Cheng C.Y."/>
            <person name="Krishnakumar V."/>
            <person name="Chan A.P."/>
            <person name="Thibaud-Nissen F."/>
            <person name="Schobel S."/>
            <person name="Town C.D."/>
        </authorList>
    </citation>
    <scope>GENOME REANNOTATION</scope>
    <source>
        <strain>cv. Columbia</strain>
    </source>
</reference>
<reference key="3">
    <citation type="journal article" date="2006" name="Plant Biotechnol. J.">
        <title>Simultaneous high-throughput recombinational cloning of open reading frames in closed and open configurations.</title>
        <authorList>
            <person name="Underwood B.A."/>
            <person name="Vanderhaeghen R."/>
            <person name="Whitford R."/>
            <person name="Town C.D."/>
            <person name="Hilson P."/>
        </authorList>
    </citation>
    <scope>NUCLEOTIDE SEQUENCE [LARGE SCALE MRNA]</scope>
    <source>
        <strain>cv. Columbia</strain>
    </source>
</reference>
<reference key="4">
    <citation type="journal article" date="2003" name="Plant Physiol.">
        <title>Members of the Arabidopsis-SKP1-like gene family exhibit a variety of expression patterns and may play diverse roles in Arabidopsis.</title>
        <authorList>
            <person name="Zhao D."/>
            <person name="Ni W."/>
            <person name="Feng B."/>
            <person name="Han T."/>
            <person name="Petrasek M.G."/>
            <person name="Ma H."/>
        </authorList>
    </citation>
    <scope>GENE FAMILY</scope>
    <scope>NOMENCLATURE</scope>
</reference>
<reference key="5">
    <citation type="journal article" date="2004" name="Plant Cell Physiol.">
        <title>Expression and interaction analysis of Arabidopsis Skp1-related genes.</title>
        <authorList>
            <person name="Takahashi N."/>
            <person name="Kuroda H."/>
            <person name="Kuromori T."/>
            <person name="Hirayama T."/>
            <person name="Seki M."/>
            <person name="Shinozaki K."/>
            <person name="Shimada H."/>
            <person name="Matsui M."/>
        </authorList>
    </citation>
    <scope>TISSUE SPECIFICITY</scope>
    <scope>INTERACTION WITH AT3G61590</scope>
</reference>
<reference key="6">
    <citation type="journal article" date="2009" name="Plant J.">
        <title>An F-box gene, CPR30, functions as a negative regulator of the defense response in Arabidopsis.</title>
        <authorList>
            <person name="Gou M."/>
            <person name="Su N."/>
            <person name="Zheng J."/>
            <person name="Huai J."/>
            <person name="Wu G."/>
            <person name="Zhao J."/>
            <person name="He J."/>
            <person name="Tang D."/>
            <person name="Yang S."/>
            <person name="Wang G."/>
        </authorList>
    </citation>
    <scope>INTERACTION WITH CPR1/CPR30</scope>
</reference>
<protein>
    <recommendedName>
        <fullName>SKP1-like protein 9</fullName>
        <shortName>AtSK9</shortName>
    </recommendedName>
</protein>
<comment type="function">
    <text evidence="1">Involved in ubiquitination and subsequent proteasomal degradation of target proteins. Together with CUL1, RBX1 and a F-box protein, it forms a SCF E3 ubiquitin ligase complex. The functional specificity of this complex depends on the type of F-box protein. In the SCF complex, it serves as an adapter that links the F-box protein to CUL1 (By similarity).</text>
</comment>
<comment type="pathway">
    <text>Protein modification; protein ubiquitination.</text>
</comment>
<comment type="subunit">
    <text evidence="1 2 3">Part of a SCF (SKP1-cullin-F-box) protein ligase complex (By similarity). Interacts with CPR1/CPR30 and At3g61590.</text>
</comment>
<comment type="subcellular location">
    <subcellularLocation>
        <location evidence="1">Nucleus</location>
    </subcellularLocation>
</comment>
<comment type="tissue specificity">
    <text evidence="2">Expressed in leaves, shoot apical meristem (SAM), roots, flowers and pollen.</text>
</comment>
<comment type="similarity">
    <text evidence="4">Belongs to the SKP1 family.</text>
</comment>
<comment type="sequence caution" evidence="4">
    <conflict type="erroneous termination">
        <sequence resource="EMBL-CDS" id="ABK28567"/>
    </conflict>
    <text>Extended C-terminus.</text>
</comment>
<dbReference type="EMBL" id="AB025634">
    <property type="protein sequence ID" value="BAB02847.1"/>
    <property type="molecule type" value="Genomic_DNA"/>
</dbReference>
<dbReference type="EMBL" id="CP002686">
    <property type="protein sequence ID" value="AEE76558.1"/>
    <property type="molecule type" value="Genomic_DNA"/>
</dbReference>
<dbReference type="EMBL" id="DQ446683">
    <property type="protein sequence ID" value="ABE65955.1"/>
    <property type="molecule type" value="mRNA"/>
</dbReference>
<dbReference type="EMBL" id="DQ653099">
    <property type="protein sequence ID" value="ABK28567.1"/>
    <property type="status" value="ALT_SEQ"/>
    <property type="molecule type" value="mRNA"/>
</dbReference>
<dbReference type="RefSeq" id="NP_566694.1">
    <property type="nucleotide sequence ID" value="NM_113080.2"/>
</dbReference>
<dbReference type="SMR" id="Q9LSX9"/>
<dbReference type="BioGRID" id="7071">
    <property type="interactions" value="37"/>
</dbReference>
<dbReference type="ComplexPortal" id="CPX-1436">
    <property type="entry name" value="SCF(COI1) ubiquitin ligase complex, variant CUL1-RBX1A-ASK9"/>
</dbReference>
<dbReference type="ComplexPortal" id="CPX-1457">
    <property type="entry name" value="SCF(COI1) ubiquitin ligase complex, variant CUL1-RBX1B-ASK9"/>
</dbReference>
<dbReference type="ComplexPortal" id="CPX-1479">
    <property type="entry name" value="SCF(COI1) ubiquitin ligase complex, variant CUL2-RBX1A-ASK9"/>
</dbReference>
<dbReference type="ComplexPortal" id="CPX-1502">
    <property type="entry name" value="SCF(COI1) ubiquitin ligase complex, variant CUL2-RBX1B-ASK9"/>
</dbReference>
<dbReference type="ComplexPortal" id="CPX-1522">
    <property type="entry name" value="SCF(TIR1) ubiquitin ligase complex, variant CUL1-RBX1A-ASK9"/>
</dbReference>
<dbReference type="ComplexPortal" id="CPX-1543">
    <property type="entry name" value="SCF(TIR1) ubiquitin ligase complex, variant CUL1-RBX1B-ASK9"/>
</dbReference>
<dbReference type="ComplexPortal" id="CPX-1565">
    <property type="entry name" value="SCF(TIR1) ubiquitin ligase complex, variant CUL2-RBX1A-ASK9"/>
</dbReference>
<dbReference type="ComplexPortal" id="CPX-1586">
    <property type="entry name" value="SCF(TIR1) ubiquitin ligase complex, variant CUL2-RBX1B-ASK9"/>
</dbReference>
<dbReference type="FunCoup" id="Q9LSX9">
    <property type="interactions" value="2399"/>
</dbReference>
<dbReference type="IntAct" id="Q9LSX9">
    <property type="interactions" value="10"/>
</dbReference>
<dbReference type="STRING" id="3702.Q9LSX9"/>
<dbReference type="PaxDb" id="3702-AT3G21850.1"/>
<dbReference type="ProteomicsDB" id="246857"/>
<dbReference type="EnsemblPlants" id="AT3G21850.1">
    <property type="protein sequence ID" value="AT3G21850.1"/>
    <property type="gene ID" value="AT3G21850"/>
</dbReference>
<dbReference type="GeneID" id="821739"/>
<dbReference type="Gramene" id="AT3G21850.1">
    <property type="protein sequence ID" value="AT3G21850.1"/>
    <property type="gene ID" value="AT3G21850"/>
</dbReference>
<dbReference type="KEGG" id="ath:AT3G21850"/>
<dbReference type="Araport" id="AT3G21850"/>
<dbReference type="TAIR" id="AT3G21850">
    <property type="gene designation" value="SK9"/>
</dbReference>
<dbReference type="eggNOG" id="KOG1724">
    <property type="taxonomic scope" value="Eukaryota"/>
</dbReference>
<dbReference type="HOGENOM" id="CLU_059252_6_1_1"/>
<dbReference type="InParanoid" id="Q9LSX9"/>
<dbReference type="OMA" id="MSENDCT"/>
<dbReference type="PhylomeDB" id="Q9LSX9"/>
<dbReference type="UniPathway" id="UPA00143"/>
<dbReference type="PRO" id="PR:Q9LSX9"/>
<dbReference type="Proteomes" id="UP000006548">
    <property type="component" value="Chromosome 3"/>
</dbReference>
<dbReference type="ExpressionAtlas" id="Q9LSX9">
    <property type="expression patterns" value="baseline and differential"/>
</dbReference>
<dbReference type="GO" id="GO:0005634">
    <property type="term" value="C:nucleus"/>
    <property type="evidence" value="ECO:0007669"/>
    <property type="project" value="UniProtKB-SubCell"/>
</dbReference>
<dbReference type="GO" id="GO:0019005">
    <property type="term" value="C:SCF ubiquitin ligase complex"/>
    <property type="evidence" value="ECO:0000250"/>
    <property type="project" value="ComplexPortal"/>
</dbReference>
<dbReference type="GO" id="GO:0009734">
    <property type="term" value="P:auxin-activated signaling pathway"/>
    <property type="evidence" value="ECO:0000303"/>
    <property type="project" value="ComplexPortal"/>
</dbReference>
<dbReference type="GO" id="GO:0009867">
    <property type="term" value="P:jasmonic acid mediated signaling pathway"/>
    <property type="evidence" value="ECO:0000315"/>
    <property type="project" value="ComplexPortal"/>
</dbReference>
<dbReference type="GO" id="GO:0016567">
    <property type="term" value="P:protein ubiquitination"/>
    <property type="evidence" value="ECO:0007669"/>
    <property type="project" value="UniProtKB-UniPathway"/>
</dbReference>
<dbReference type="GO" id="GO:0007346">
    <property type="term" value="P:regulation of mitotic cell cycle"/>
    <property type="evidence" value="ECO:0000304"/>
    <property type="project" value="TAIR"/>
</dbReference>
<dbReference type="GO" id="GO:0009733">
    <property type="term" value="P:response to auxin"/>
    <property type="evidence" value="ECO:0000303"/>
    <property type="project" value="ComplexPortal"/>
</dbReference>
<dbReference type="GO" id="GO:0009753">
    <property type="term" value="P:response to jasmonic acid"/>
    <property type="evidence" value="ECO:0000315"/>
    <property type="project" value="ComplexPortal"/>
</dbReference>
<dbReference type="GO" id="GO:0006511">
    <property type="term" value="P:ubiquitin-dependent protein catabolic process"/>
    <property type="evidence" value="ECO:0007669"/>
    <property type="project" value="InterPro"/>
</dbReference>
<dbReference type="CDD" id="cd18322">
    <property type="entry name" value="BTB_POZ_SKP1"/>
    <property type="match status" value="1"/>
</dbReference>
<dbReference type="FunFam" id="3.30.710.10:FF:000230">
    <property type="entry name" value="SKP1-like protein 7"/>
    <property type="match status" value="1"/>
</dbReference>
<dbReference type="Gene3D" id="3.30.710.10">
    <property type="entry name" value="Potassium Channel Kv1.1, Chain A"/>
    <property type="match status" value="1"/>
</dbReference>
<dbReference type="InterPro" id="IPR016897">
    <property type="entry name" value="SKP1"/>
</dbReference>
<dbReference type="InterPro" id="IPR001232">
    <property type="entry name" value="SKP1-like"/>
</dbReference>
<dbReference type="InterPro" id="IPR036296">
    <property type="entry name" value="SKP1-like_dim_sf"/>
</dbReference>
<dbReference type="InterPro" id="IPR011333">
    <property type="entry name" value="SKP1/BTB/POZ_sf"/>
</dbReference>
<dbReference type="InterPro" id="IPR016072">
    <property type="entry name" value="Skp1_comp_dimer"/>
</dbReference>
<dbReference type="InterPro" id="IPR016073">
    <property type="entry name" value="Skp1_comp_POZ"/>
</dbReference>
<dbReference type="PANTHER" id="PTHR11165">
    <property type="entry name" value="SKP1"/>
    <property type="match status" value="1"/>
</dbReference>
<dbReference type="Pfam" id="PF01466">
    <property type="entry name" value="Skp1"/>
    <property type="match status" value="1"/>
</dbReference>
<dbReference type="Pfam" id="PF03931">
    <property type="entry name" value="Skp1_POZ"/>
    <property type="match status" value="1"/>
</dbReference>
<dbReference type="PIRSF" id="PIRSF028729">
    <property type="entry name" value="E3_ubiquit_lig_SCF_Skp"/>
    <property type="match status" value="1"/>
</dbReference>
<dbReference type="SMART" id="SM00512">
    <property type="entry name" value="Skp1"/>
    <property type="match status" value="1"/>
</dbReference>
<dbReference type="SUPFAM" id="SSF54695">
    <property type="entry name" value="POZ domain"/>
    <property type="match status" value="1"/>
</dbReference>
<dbReference type="SUPFAM" id="SSF81382">
    <property type="entry name" value="Skp1 dimerisation domain-like"/>
    <property type="match status" value="1"/>
</dbReference>
<proteinExistence type="evidence at protein level"/>
<sequence length="153" mass="17439">MSTKKIILKSSDGHSFEVEEEAARQCQIIIAHMSENDCTDNGIPLPNVTGKILAMVIEYCNKHHVDAANPCSDDDLKKWDKEFMEKDTSTIFDLIKAANYLNIKSLFDLACQTVAEIIKGNTPEQIREFFNIENDLTPEEEAAIRRENKWAFE</sequence>
<keyword id="KW-0539">Nucleus</keyword>
<keyword id="KW-1185">Reference proteome</keyword>
<keyword id="KW-0833">Ubl conjugation pathway</keyword>
<name>ASK9_ARATH</name>
<evidence type="ECO:0000250" key="1"/>
<evidence type="ECO:0000269" key="2">
    <source>
    </source>
</evidence>
<evidence type="ECO:0000269" key="3">
    <source>
    </source>
</evidence>
<evidence type="ECO:0000305" key="4"/>